<name>MNHE2_STAA8</name>
<keyword id="KW-0050">Antiport</keyword>
<keyword id="KW-1003">Cell membrane</keyword>
<keyword id="KW-0406">Ion transport</keyword>
<keyword id="KW-0472">Membrane</keyword>
<keyword id="KW-1185">Reference proteome</keyword>
<keyword id="KW-0812">Transmembrane</keyword>
<keyword id="KW-1133">Transmembrane helix</keyword>
<keyword id="KW-0813">Transport</keyword>
<reference key="1">
    <citation type="book" date="2006" name="Gram positive pathogens, 2nd edition">
        <title>The Staphylococcus aureus NCTC 8325 genome.</title>
        <editorList>
            <person name="Fischetti V."/>
            <person name="Novick R."/>
            <person name="Ferretti J."/>
            <person name="Portnoy D."/>
            <person name="Rood J."/>
        </editorList>
        <authorList>
            <person name="Gillaspy A.F."/>
            <person name="Worrell V."/>
            <person name="Orvis J."/>
            <person name="Roe B.A."/>
            <person name="Dyer D.W."/>
            <person name="Iandolo J.J."/>
        </authorList>
    </citation>
    <scope>NUCLEOTIDE SEQUENCE [LARGE SCALE GENOMIC DNA]</scope>
    <source>
        <strain>NCTC 8325 / PS 47</strain>
    </source>
</reference>
<sequence length="160" mass="18851">MNQIVLNIIIAFLWVLFQDEDHFKFSTFFSGYLIGLIVIYILHRFFSDDFYVRKIWVAIKFLGVYLYQLITSSISTINYILFKTKDMNPGLLSYETRLTSDWSITFLTILIIITPGSTVIRISQDSKKFFIHSIDVSEKEKDSLLRSIKHYEDLILEVSR</sequence>
<comment type="subunit">
    <text evidence="1">May form a heterooligomeric complex that consists of seven subunits: mnhA2, mnhB2, mnhC2, mnhD2, mnhE2, mnhF2 and mnhG2.</text>
</comment>
<comment type="subcellular location">
    <subcellularLocation>
        <location evidence="3">Cell membrane</location>
        <topology evidence="3">Multi-pass membrane protein</topology>
    </subcellularLocation>
</comment>
<comment type="similarity">
    <text evidence="3">Belongs to the CPA3 antiporters (TC 2.A.63) subunit E family.</text>
</comment>
<feature type="chain" id="PRO_0000372220" description="Putative antiporter subunit mnhE2">
    <location>
        <begin position="1"/>
        <end position="160"/>
    </location>
</feature>
<feature type="transmembrane region" description="Helical" evidence="2">
    <location>
        <begin position="22"/>
        <end position="42"/>
    </location>
</feature>
<feature type="transmembrane region" description="Helical" evidence="2">
    <location>
        <begin position="55"/>
        <end position="75"/>
    </location>
</feature>
<feature type="transmembrane region" description="Helical" evidence="2">
    <location>
        <begin position="100"/>
        <end position="120"/>
    </location>
</feature>
<protein>
    <recommendedName>
        <fullName>Putative antiporter subunit mnhE2</fullName>
    </recommendedName>
    <alternativeName>
        <fullName>Mrp complex subunit E2</fullName>
    </alternativeName>
    <alternativeName>
        <fullName>Putative NADH-ubiquinone oxidoreductase subunit mnhE2</fullName>
    </alternativeName>
</protein>
<proteinExistence type="inferred from homology"/>
<evidence type="ECO:0000250" key="1"/>
<evidence type="ECO:0000255" key="2"/>
<evidence type="ECO:0000305" key="3"/>
<accession>Q2G210</accession>
<gene>
    <name type="primary">mnhE2</name>
    <name type="synonym">mrpE2</name>
    <name type="ordered locus">SAOUHSC_00629</name>
</gene>
<organism>
    <name type="scientific">Staphylococcus aureus (strain NCTC 8325 / PS 47)</name>
    <dbReference type="NCBI Taxonomy" id="93061"/>
    <lineage>
        <taxon>Bacteria</taxon>
        <taxon>Bacillati</taxon>
        <taxon>Bacillota</taxon>
        <taxon>Bacilli</taxon>
        <taxon>Bacillales</taxon>
        <taxon>Staphylococcaceae</taxon>
        <taxon>Staphylococcus</taxon>
    </lineage>
</organism>
<dbReference type="EMBL" id="CP000253">
    <property type="protein sequence ID" value="ABD29766.1"/>
    <property type="molecule type" value="Genomic_DNA"/>
</dbReference>
<dbReference type="RefSeq" id="WP_001071973.1">
    <property type="nucleotide sequence ID" value="NZ_LS483365.1"/>
</dbReference>
<dbReference type="RefSeq" id="YP_499191.1">
    <property type="nucleotide sequence ID" value="NC_007795.1"/>
</dbReference>
<dbReference type="SMR" id="Q2G210"/>
<dbReference type="STRING" id="93061.SAOUHSC_00629"/>
<dbReference type="PaxDb" id="1280-SAXN108_0693"/>
<dbReference type="GeneID" id="3920039"/>
<dbReference type="KEGG" id="sao:SAOUHSC_00629"/>
<dbReference type="PATRIC" id="fig|93061.5.peg.565"/>
<dbReference type="eggNOG" id="COG1863">
    <property type="taxonomic scope" value="Bacteria"/>
</dbReference>
<dbReference type="HOGENOM" id="CLU_086615_3_2_9"/>
<dbReference type="OrthoDB" id="9800498at2"/>
<dbReference type="PRO" id="PR:Q2G210"/>
<dbReference type="Proteomes" id="UP000008816">
    <property type="component" value="Chromosome"/>
</dbReference>
<dbReference type="GO" id="GO:0005886">
    <property type="term" value="C:plasma membrane"/>
    <property type="evidence" value="ECO:0007669"/>
    <property type="project" value="UniProtKB-SubCell"/>
</dbReference>
<dbReference type="GO" id="GO:0015385">
    <property type="term" value="F:sodium:proton antiporter activity"/>
    <property type="evidence" value="ECO:0000318"/>
    <property type="project" value="GO_Central"/>
</dbReference>
<dbReference type="GO" id="GO:0035725">
    <property type="term" value="P:sodium ion transmembrane transport"/>
    <property type="evidence" value="ECO:0000318"/>
    <property type="project" value="GO_Central"/>
</dbReference>
<dbReference type="InterPro" id="IPR002758">
    <property type="entry name" value="Cation_antiport_E"/>
</dbReference>
<dbReference type="NCBIfam" id="NF006517">
    <property type="entry name" value="PRK08965.1-1"/>
    <property type="match status" value="1"/>
</dbReference>
<dbReference type="PANTHER" id="PTHR34584">
    <property type="entry name" value="NA(+)/H(+) ANTIPORTER SUBUNIT E1"/>
    <property type="match status" value="1"/>
</dbReference>
<dbReference type="PANTHER" id="PTHR34584:SF1">
    <property type="entry name" value="NA(+)_H(+) ANTIPORTER SUBUNIT E1"/>
    <property type="match status" value="1"/>
</dbReference>
<dbReference type="Pfam" id="PF01899">
    <property type="entry name" value="MNHE"/>
    <property type="match status" value="1"/>
</dbReference>
<dbReference type="PIRSF" id="PIRSF019239">
    <property type="entry name" value="MrpE"/>
    <property type="match status" value="1"/>
</dbReference>